<name>FEMX_STAAU</name>
<sequence>MEKMHITNQEHDAFVKSHPNGDLLQLTKWAETKKLTGWYARRIAVGRDGEVQGVAQLLFKKVPKLPYTLCYISRGFVVDYSNKEALNALLDSAKEIAKAEKAYAIKIDPDVEVDKGTDALQNLKALGFKHKGFKEGLSKDYIQPRMTMITPIDKNDDELLNSFERRNRSKVRLALKRGTTVERSDREGLKTFAELMKITGERDGFLTRDISYFENIYDALHEDGDAELFLVKLDPKENIAKVNQELNELHAEIAKWQQKMETSEKQAKKAQNMINDAQNKIAKNEDLKRDLEALEKEHPEGIYLSGALLMFAGSKSYYLYGASSNEFRDFLPNHHMQYTMMKYAREHGATTYDFGGTDNDPDKDSEHYGLWAFKKVWGTYLSEKIGEFDYILNQPLYQLIEQVKPRLTKAKIKISRKLKRK</sequence>
<gene>
    <name type="primary">femX</name>
    <name type="synonym">fmhB</name>
</gene>
<accession>P0C1Q0</accession>
<accession>Q9RQG7</accession>
<accession>Q9X4D7</accession>
<comment type="function">
    <text evidence="1">Catalyzes the incorporation of the first glycine of the pentaglycine interpeptide bridge, which is characteristic of the S.aureus peptidoglycan. This glycine is added to the epsilon-amino group of the L-lysine of the membrane-bound lipid II intermediate (GlcNAc-(beta-1,4)-N-acetylmuramic acid(-L-Ala-D-iGln-L-Lys-D-Ala-D-Ala)-pyrophosphoryl-undecaprenol), using glycyl-tRNA(Gly) as donor, in a ribosome-independent mechanism (By similarity).</text>
</comment>
<comment type="catalytic activity">
    <reaction>
        <text>beta-D-GlcNAc-(1-&gt;4)-Mur2Ac(oyl-L-Ala-D-isoglutaminyl-L-Lys-D-Ala-D-Ala)-di-trans,octa-cis-undecaprenyl diphosphate + glycyl-tRNA(Gly) = beta-D-GlcNAc-(1-&gt;4)-Mur2Ac(oyl-L-Ala-D-isoglutaminyl-L-Lys-(N(6)-Gly)-D-Ala-D-Ala)-di-trans,octa-cis-undecaprenyl diphosphate + tRNA(Gly) + H(+)</text>
        <dbReference type="Rhea" id="RHEA:30435"/>
        <dbReference type="Rhea" id="RHEA-COMP:9664"/>
        <dbReference type="Rhea" id="RHEA-COMP:9683"/>
        <dbReference type="ChEBI" id="CHEBI:15378"/>
        <dbReference type="ChEBI" id="CHEBI:62233"/>
        <dbReference type="ChEBI" id="CHEBI:62234"/>
        <dbReference type="ChEBI" id="CHEBI:78442"/>
        <dbReference type="ChEBI" id="CHEBI:78522"/>
        <dbReference type="EC" id="2.3.2.16"/>
    </reaction>
</comment>
<comment type="subunit">
    <text evidence="1">Monomer.</text>
</comment>
<comment type="subcellular location">
    <subcellularLocation>
        <location evidence="2">Cytoplasm</location>
    </subcellularLocation>
</comment>
<comment type="similarity">
    <text evidence="2">Belongs to the FemABX family.</text>
</comment>
<proteinExistence type="inferred from homology"/>
<reference key="1">
    <citation type="journal article" date="1999" name="FEMS Microbiol. Lett.">
        <title>Identification of three additional femAB-like open reading frames in Staphylococcus aureus.</title>
        <authorList>
            <person name="Tschierske M."/>
            <person name="Mori C."/>
            <person name="Rohrer S."/>
            <person name="Ehlert K."/>
            <person name="Shaw K.J."/>
            <person name="Berger-Baechi B."/>
        </authorList>
    </citation>
    <scope>NUCLEOTIDE SEQUENCE [GENOMIC DNA]</scope>
    <source>
        <strain>ATCC 55748</strain>
    </source>
</reference>
<feature type="chain" id="PRO_0000236167" description="Lipid II:glycine glycyltransferase">
    <location>
        <begin position="1"/>
        <end position="421"/>
    </location>
</feature>
<protein>
    <recommendedName>
        <fullName>Lipid II:glycine glycyltransferase</fullName>
        <ecNumber>2.3.2.16</ecNumber>
    </recommendedName>
    <alternativeName>
        <fullName>Factor essential for expression of methicillin resistance X</fullName>
    </alternativeName>
</protein>
<dbReference type="EC" id="2.3.2.16"/>
<dbReference type="EMBL" id="AF106850">
    <property type="protein sequence ID" value="AAD23961.1"/>
    <property type="molecule type" value="Genomic_DNA"/>
</dbReference>
<dbReference type="RefSeq" id="WP_000413862.1">
    <property type="nucleotide sequence ID" value="NZ_WYDB01000006.1"/>
</dbReference>
<dbReference type="SMR" id="P0C1Q0"/>
<dbReference type="OMA" id="PNRMRLY"/>
<dbReference type="BRENDA" id="2.3.2.16">
    <property type="organism ID" value="3352"/>
</dbReference>
<dbReference type="GO" id="GO:0005737">
    <property type="term" value="C:cytoplasm"/>
    <property type="evidence" value="ECO:0007669"/>
    <property type="project" value="UniProtKB-SubCell"/>
</dbReference>
<dbReference type="GO" id="GO:0016755">
    <property type="term" value="F:aminoacyltransferase activity"/>
    <property type="evidence" value="ECO:0007669"/>
    <property type="project" value="InterPro"/>
</dbReference>
<dbReference type="GO" id="GO:0071555">
    <property type="term" value="P:cell wall organization"/>
    <property type="evidence" value="ECO:0007669"/>
    <property type="project" value="UniProtKB-KW"/>
</dbReference>
<dbReference type="GO" id="GO:0009252">
    <property type="term" value="P:peptidoglycan biosynthetic process"/>
    <property type="evidence" value="ECO:0007669"/>
    <property type="project" value="UniProtKB-KW"/>
</dbReference>
<dbReference type="GO" id="GO:0008360">
    <property type="term" value="P:regulation of cell shape"/>
    <property type="evidence" value="ECO:0007669"/>
    <property type="project" value="UniProtKB-KW"/>
</dbReference>
<dbReference type="Gene3D" id="1.20.58.90">
    <property type="match status" value="1"/>
</dbReference>
<dbReference type="Gene3D" id="3.40.630.30">
    <property type="match status" value="2"/>
</dbReference>
<dbReference type="InterPro" id="IPR016181">
    <property type="entry name" value="Acyl_CoA_acyltransferase"/>
</dbReference>
<dbReference type="InterPro" id="IPR003447">
    <property type="entry name" value="FEMABX"/>
</dbReference>
<dbReference type="InterPro" id="IPR050644">
    <property type="entry name" value="PG_Glycine_Bridge_Synth"/>
</dbReference>
<dbReference type="PANTHER" id="PTHR36174">
    <property type="entry name" value="LIPID II:GLYCINE GLYCYLTRANSFERASE"/>
    <property type="match status" value="1"/>
</dbReference>
<dbReference type="PANTHER" id="PTHR36174:SF1">
    <property type="entry name" value="LIPID II:GLYCINE GLYCYLTRANSFERASE"/>
    <property type="match status" value="1"/>
</dbReference>
<dbReference type="Pfam" id="PF02388">
    <property type="entry name" value="FemAB"/>
    <property type="match status" value="1"/>
</dbReference>
<dbReference type="SUPFAM" id="SSF55729">
    <property type="entry name" value="Acyl-CoA N-acyltransferases (Nat)"/>
    <property type="match status" value="2"/>
</dbReference>
<dbReference type="PROSITE" id="PS51191">
    <property type="entry name" value="FEMABX"/>
    <property type="match status" value="1"/>
</dbReference>
<evidence type="ECO:0000250" key="1"/>
<evidence type="ECO:0000305" key="2"/>
<organism>
    <name type="scientific">Staphylococcus aureus</name>
    <dbReference type="NCBI Taxonomy" id="1280"/>
    <lineage>
        <taxon>Bacteria</taxon>
        <taxon>Bacillati</taxon>
        <taxon>Bacillota</taxon>
        <taxon>Bacilli</taxon>
        <taxon>Bacillales</taxon>
        <taxon>Staphylococcaceae</taxon>
        <taxon>Staphylococcus</taxon>
    </lineage>
</organism>
<keyword id="KW-0012">Acyltransferase</keyword>
<keyword id="KW-0133">Cell shape</keyword>
<keyword id="KW-0961">Cell wall biogenesis/degradation</keyword>
<keyword id="KW-0963">Cytoplasm</keyword>
<keyword id="KW-0573">Peptidoglycan synthesis</keyword>
<keyword id="KW-0808">Transferase</keyword>